<comment type="function">
    <text evidence="1">Forms part of the ribosomal stalk, playing a central role in the interaction of the ribosome with GTP-bound translation factors.</text>
</comment>
<comment type="subunit">
    <text evidence="1">Part of the ribosomal stalk of the 50S ribosomal subunit. The N-terminus interacts with L11 and the large rRNA to form the base of the stalk. The C-terminus forms an elongated spine to which L12 dimers bind in a sequential fashion forming a multimeric L10(L12)X complex.</text>
</comment>
<comment type="similarity">
    <text evidence="1">Belongs to the universal ribosomal protein uL10 family.</text>
</comment>
<organism>
    <name type="scientific">Staphylococcus carnosus (strain TM300)</name>
    <dbReference type="NCBI Taxonomy" id="396513"/>
    <lineage>
        <taxon>Bacteria</taxon>
        <taxon>Bacillati</taxon>
        <taxon>Bacillota</taxon>
        <taxon>Bacilli</taxon>
        <taxon>Bacillales</taxon>
        <taxon>Staphylococcaceae</taxon>
        <taxon>Staphylococcus</taxon>
    </lineage>
</organism>
<keyword id="KW-1185">Reference proteome</keyword>
<keyword id="KW-0687">Ribonucleoprotein</keyword>
<keyword id="KW-0689">Ribosomal protein</keyword>
<keyword id="KW-0694">RNA-binding</keyword>
<keyword id="KW-0699">rRNA-binding</keyword>
<sequence>MSGIIEAKKQLVEQIADQLKNSVSTVIVNYRGLTVAEVTELRKQLREAGVEYKVYKNTMMRRAAEQAGLEGLDEFLTGPTAVATSTEDVVAPAKVIAGFAKEHEALEIKTGVMDGSIISAEEVKTVGSLPSHDGLVSMLLSVLQAPVRNFAYAVKAVGESKEESAE</sequence>
<evidence type="ECO:0000255" key="1">
    <source>
        <dbReference type="HAMAP-Rule" id="MF_00362"/>
    </source>
</evidence>
<evidence type="ECO:0000305" key="2"/>
<name>RL10_STACT</name>
<dbReference type="EMBL" id="AM295250">
    <property type="protein sequence ID" value="CAL27108.1"/>
    <property type="molecule type" value="Genomic_DNA"/>
</dbReference>
<dbReference type="RefSeq" id="WP_012664223.1">
    <property type="nucleotide sequence ID" value="NC_012121.1"/>
</dbReference>
<dbReference type="SMR" id="B9DKX2"/>
<dbReference type="GeneID" id="93795125"/>
<dbReference type="KEGG" id="sca:SCA_0195"/>
<dbReference type="eggNOG" id="COG0244">
    <property type="taxonomic scope" value="Bacteria"/>
</dbReference>
<dbReference type="HOGENOM" id="CLU_092227_2_0_9"/>
<dbReference type="OrthoDB" id="9808307at2"/>
<dbReference type="BioCyc" id="SCAR396513:SCA_RS01010-MONOMER"/>
<dbReference type="Proteomes" id="UP000000444">
    <property type="component" value="Chromosome"/>
</dbReference>
<dbReference type="GO" id="GO:0015934">
    <property type="term" value="C:large ribosomal subunit"/>
    <property type="evidence" value="ECO:0007669"/>
    <property type="project" value="InterPro"/>
</dbReference>
<dbReference type="GO" id="GO:0070180">
    <property type="term" value="F:large ribosomal subunit rRNA binding"/>
    <property type="evidence" value="ECO:0007669"/>
    <property type="project" value="UniProtKB-UniRule"/>
</dbReference>
<dbReference type="GO" id="GO:0003735">
    <property type="term" value="F:structural constituent of ribosome"/>
    <property type="evidence" value="ECO:0007669"/>
    <property type="project" value="InterPro"/>
</dbReference>
<dbReference type="GO" id="GO:0006412">
    <property type="term" value="P:translation"/>
    <property type="evidence" value="ECO:0007669"/>
    <property type="project" value="UniProtKB-UniRule"/>
</dbReference>
<dbReference type="CDD" id="cd05797">
    <property type="entry name" value="Ribosomal_L10"/>
    <property type="match status" value="1"/>
</dbReference>
<dbReference type="FunFam" id="3.30.70.1730:FF:000001">
    <property type="entry name" value="50S ribosomal protein L10"/>
    <property type="match status" value="1"/>
</dbReference>
<dbReference type="Gene3D" id="3.30.70.1730">
    <property type="match status" value="1"/>
</dbReference>
<dbReference type="HAMAP" id="MF_00362">
    <property type="entry name" value="Ribosomal_uL10"/>
    <property type="match status" value="1"/>
</dbReference>
<dbReference type="InterPro" id="IPR001790">
    <property type="entry name" value="Ribosomal_uL10"/>
</dbReference>
<dbReference type="InterPro" id="IPR043141">
    <property type="entry name" value="Ribosomal_uL10-like_sf"/>
</dbReference>
<dbReference type="InterPro" id="IPR022973">
    <property type="entry name" value="Ribosomal_uL10_bac"/>
</dbReference>
<dbReference type="InterPro" id="IPR047865">
    <property type="entry name" value="Ribosomal_uL10_bac_type"/>
</dbReference>
<dbReference type="InterPro" id="IPR002363">
    <property type="entry name" value="Ribosomal_uL10_CS_bac"/>
</dbReference>
<dbReference type="NCBIfam" id="NF000955">
    <property type="entry name" value="PRK00099.1-1"/>
    <property type="match status" value="1"/>
</dbReference>
<dbReference type="PANTHER" id="PTHR11560">
    <property type="entry name" value="39S RIBOSOMAL PROTEIN L10, MITOCHONDRIAL"/>
    <property type="match status" value="1"/>
</dbReference>
<dbReference type="Pfam" id="PF00466">
    <property type="entry name" value="Ribosomal_L10"/>
    <property type="match status" value="1"/>
</dbReference>
<dbReference type="SUPFAM" id="SSF160369">
    <property type="entry name" value="Ribosomal protein L10-like"/>
    <property type="match status" value="1"/>
</dbReference>
<dbReference type="PROSITE" id="PS01109">
    <property type="entry name" value="RIBOSOMAL_L10"/>
    <property type="match status" value="1"/>
</dbReference>
<gene>
    <name evidence="1" type="primary">rplJ</name>
    <name type="ordered locus">Sca_0195</name>
</gene>
<protein>
    <recommendedName>
        <fullName evidence="1">Large ribosomal subunit protein uL10</fullName>
    </recommendedName>
    <alternativeName>
        <fullName evidence="2">50S ribosomal protein L10</fullName>
    </alternativeName>
</protein>
<proteinExistence type="inferred from homology"/>
<feature type="chain" id="PRO_1000195565" description="Large ribosomal subunit protein uL10">
    <location>
        <begin position="1"/>
        <end position="166"/>
    </location>
</feature>
<accession>B9DKX2</accession>
<reference key="1">
    <citation type="journal article" date="2009" name="Appl. Environ. Microbiol.">
        <title>Genome analysis of the meat starter culture bacterium Staphylococcus carnosus TM300.</title>
        <authorList>
            <person name="Rosenstein R."/>
            <person name="Nerz C."/>
            <person name="Biswas L."/>
            <person name="Resch A."/>
            <person name="Raddatz G."/>
            <person name="Schuster S.C."/>
            <person name="Goetz F."/>
        </authorList>
    </citation>
    <scope>NUCLEOTIDE SEQUENCE [LARGE SCALE GENOMIC DNA]</scope>
    <source>
        <strain>TM300</strain>
    </source>
</reference>